<feature type="chain" id="PRO_1000066267" description="Orotate phosphoribosyltransferase">
    <location>
        <begin position="1"/>
        <end position="193"/>
    </location>
</feature>
<feature type="binding site" evidence="1">
    <location>
        <position position="102"/>
    </location>
    <ligand>
        <name>5-phospho-alpha-D-ribose 1-diphosphate</name>
        <dbReference type="ChEBI" id="CHEBI:58017"/>
        <note>ligand shared between dimeric partners</note>
    </ligand>
</feature>
<feature type="binding site" description="in other chain" evidence="1">
    <location>
        <position position="103"/>
    </location>
    <ligand>
        <name>5-phospho-alpha-D-ribose 1-diphosphate</name>
        <dbReference type="ChEBI" id="CHEBI:58017"/>
        <note>ligand shared between dimeric partners</note>
    </ligand>
</feature>
<feature type="binding site" evidence="1">
    <location>
        <position position="106"/>
    </location>
    <ligand>
        <name>5-phospho-alpha-D-ribose 1-diphosphate</name>
        <dbReference type="ChEBI" id="CHEBI:58017"/>
        <note>ligand shared between dimeric partners</note>
    </ligand>
</feature>
<feature type="binding site" evidence="1">
    <location>
        <position position="108"/>
    </location>
    <ligand>
        <name>5-phospho-alpha-D-ribose 1-diphosphate</name>
        <dbReference type="ChEBI" id="CHEBI:58017"/>
        <note>ligand shared between dimeric partners</note>
    </ligand>
</feature>
<feature type="binding site" description="in other chain" evidence="1">
    <location>
        <begin position="129"/>
        <end position="137"/>
    </location>
    <ligand>
        <name>5-phospho-alpha-D-ribose 1-diphosphate</name>
        <dbReference type="ChEBI" id="CHEBI:58017"/>
        <note>ligand shared between dimeric partners</note>
    </ligand>
</feature>
<feature type="binding site" evidence="1">
    <location>
        <position position="133"/>
    </location>
    <ligand>
        <name>orotate</name>
        <dbReference type="ChEBI" id="CHEBI:30839"/>
    </ligand>
</feature>
<feature type="binding site" evidence="1">
    <location>
        <position position="161"/>
    </location>
    <ligand>
        <name>orotate</name>
        <dbReference type="ChEBI" id="CHEBI:30839"/>
    </ligand>
</feature>
<sequence>MNPLNPSSDGIKENLLTLLAQKAYRFGDFSLASGKKSSHYVNCKPVSLSGPGLLSISSLFLKQINESDSGVAGLTLGADPLVSGVVILAAQSGIDLNGLIVRKEAKGHGTGAWLEGPLPPKGSVITVLEDVVTTGGSSLKAVEQLRNQGYLVKQVLAIVDREEGGLDAISKADLELNSLFFLKEIVERANSLQ</sequence>
<proteinExistence type="inferred from homology"/>
<keyword id="KW-0328">Glycosyltransferase</keyword>
<keyword id="KW-0460">Magnesium</keyword>
<keyword id="KW-0665">Pyrimidine biosynthesis</keyword>
<keyword id="KW-0808">Transferase</keyword>
<evidence type="ECO:0000255" key="1">
    <source>
        <dbReference type="HAMAP-Rule" id="MF_01208"/>
    </source>
</evidence>
<comment type="function">
    <text evidence="1">Catalyzes the transfer of a ribosyl phosphate group from 5-phosphoribose 1-diphosphate to orotate, leading to the formation of orotidine monophosphate (OMP).</text>
</comment>
<comment type="catalytic activity">
    <reaction evidence="1">
        <text>orotidine 5'-phosphate + diphosphate = orotate + 5-phospho-alpha-D-ribose 1-diphosphate</text>
        <dbReference type="Rhea" id="RHEA:10380"/>
        <dbReference type="ChEBI" id="CHEBI:30839"/>
        <dbReference type="ChEBI" id="CHEBI:33019"/>
        <dbReference type="ChEBI" id="CHEBI:57538"/>
        <dbReference type="ChEBI" id="CHEBI:58017"/>
        <dbReference type="EC" id="2.4.2.10"/>
    </reaction>
</comment>
<comment type="cofactor">
    <cofactor evidence="1">
        <name>Mg(2+)</name>
        <dbReference type="ChEBI" id="CHEBI:18420"/>
    </cofactor>
</comment>
<comment type="pathway">
    <text evidence="1">Pyrimidine metabolism; UMP biosynthesis via de novo pathway; UMP from orotate: step 1/2.</text>
</comment>
<comment type="subunit">
    <text evidence="1">Homodimer.</text>
</comment>
<comment type="similarity">
    <text evidence="1">Belongs to the purine/pyrimidine phosphoribosyltransferase family. PyrE subfamily.</text>
</comment>
<protein>
    <recommendedName>
        <fullName evidence="1">Orotate phosphoribosyltransferase</fullName>
        <shortName evidence="1">OPRT</shortName>
        <shortName evidence="1">OPRTase</shortName>
        <ecNumber evidence="1">2.4.2.10</ecNumber>
    </recommendedName>
</protein>
<dbReference type="EC" id="2.4.2.10" evidence="1"/>
<dbReference type="EMBL" id="CP000553">
    <property type="protein sequence ID" value="ABM74919.1"/>
    <property type="molecule type" value="Genomic_DNA"/>
</dbReference>
<dbReference type="RefSeq" id="WP_011823122.1">
    <property type="nucleotide sequence ID" value="NC_008819.1"/>
</dbReference>
<dbReference type="SMR" id="A2C0A9"/>
<dbReference type="KEGG" id="pme:NATL1_03551"/>
<dbReference type="eggNOG" id="COG0461">
    <property type="taxonomic scope" value="Bacteria"/>
</dbReference>
<dbReference type="HOGENOM" id="CLU_074878_2_1_3"/>
<dbReference type="UniPathway" id="UPA00070">
    <property type="reaction ID" value="UER00119"/>
</dbReference>
<dbReference type="Proteomes" id="UP000002592">
    <property type="component" value="Chromosome"/>
</dbReference>
<dbReference type="GO" id="GO:0000287">
    <property type="term" value="F:magnesium ion binding"/>
    <property type="evidence" value="ECO:0007669"/>
    <property type="project" value="UniProtKB-UniRule"/>
</dbReference>
<dbReference type="GO" id="GO:0004588">
    <property type="term" value="F:orotate phosphoribosyltransferase activity"/>
    <property type="evidence" value="ECO:0007669"/>
    <property type="project" value="UniProtKB-UniRule"/>
</dbReference>
<dbReference type="GO" id="GO:0044205">
    <property type="term" value="P:'de novo' UMP biosynthetic process"/>
    <property type="evidence" value="ECO:0007669"/>
    <property type="project" value="UniProtKB-UniRule"/>
</dbReference>
<dbReference type="GO" id="GO:0019856">
    <property type="term" value="P:pyrimidine nucleobase biosynthetic process"/>
    <property type="evidence" value="ECO:0007669"/>
    <property type="project" value="TreeGrafter"/>
</dbReference>
<dbReference type="CDD" id="cd06223">
    <property type="entry name" value="PRTases_typeI"/>
    <property type="match status" value="1"/>
</dbReference>
<dbReference type="Gene3D" id="3.40.50.2020">
    <property type="match status" value="1"/>
</dbReference>
<dbReference type="HAMAP" id="MF_01208">
    <property type="entry name" value="PyrE"/>
    <property type="match status" value="1"/>
</dbReference>
<dbReference type="InterPro" id="IPR023031">
    <property type="entry name" value="OPRT"/>
</dbReference>
<dbReference type="InterPro" id="IPR004467">
    <property type="entry name" value="Or_phspho_trans_dom"/>
</dbReference>
<dbReference type="InterPro" id="IPR000836">
    <property type="entry name" value="PRibTrfase_dom"/>
</dbReference>
<dbReference type="InterPro" id="IPR029057">
    <property type="entry name" value="PRTase-like"/>
</dbReference>
<dbReference type="NCBIfam" id="TIGR00336">
    <property type="entry name" value="pyrE"/>
    <property type="match status" value="1"/>
</dbReference>
<dbReference type="PANTHER" id="PTHR19278">
    <property type="entry name" value="OROTATE PHOSPHORIBOSYLTRANSFERASE"/>
    <property type="match status" value="1"/>
</dbReference>
<dbReference type="PANTHER" id="PTHR19278:SF9">
    <property type="entry name" value="URIDINE 5'-MONOPHOSPHATE SYNTHASE"/>
    <property type="match status" value="1"/>
</dbReference>
<dbReference type="SUPFAM" id="SSF53271">
    <property type="entry name" value="PRTase-like"/>
    <property type="match status" value="1"/>
</dbReference>
<accession>A2C0A9</accession>
<gene>
    <name evidence="1" type="primary">pyrE</name>
    <name type="ordered locus">NATL1_03551</name>
</gene>
<organism>
    <name type="scientific">Prochlorococcus marinus (strain NATL1A)</name>
    <dbReference type="NCBI Taxonomy" id="167555"/>
    <lineage>
        <taxon>Bacteria</taxon>
        <taxon>Bacillati</taxon>
        <taxon>Cyanobacteriota</taxon>
        <taxon>Cyanophyceae</taxon>
        <taxon>Synechococcales</taxon>
        <taxon>Prochlorococcaceae</taxon>
        <taxon>Prochlorococcus</taxon>
    </lineage>
</organism>
<reference key="1">
    <citation type="journal article" date="2007" name="PLoS Genet.">
        <title>Patterns and implications of gene gain and loss in the evolution of Prochlorococcus.</title>
        <authorList>
            <person name="Kettler G.C."/>
            <person name="Martiny A.C."/>
            <person name="Huang K."/>
            <person name="Zucker J."/>
            <person name="Coleman M.L."/>
            <person name="Rodrigue S."/>
            <person name="Chen F."/>
            <person name="Lapidus A."/>
            <person name="Ferriera S."/>
            <person name="Johnson J."/>
            <person name="Steglich C."/>
            <person name="Church G.M."/>
            <person name="Richardson P."/>
            <person name="Chisholm S.W."/>
        </authorList>
    </citation>
    <scope>NUCLEOTIDE SEQUENCE [LARGE SCALE GENOMIC DNA]</scope>
    <source>
        <strain>NATL1A</strain>
    </source>
</reference>
<name>PYRE_PROM1</name>